<dbReference type="EMBL" id="L19029">
    <property type="protein sequence ID" value="AAA16135.1"/>
    <property type="molecule type" value="Unassigned_DNA"/>
</dbReference>
<dbReference type="EMBL" id="CP000113">
    <property type="protein sequence ID" value="ABF89647.1"/>
    <property type="molecule type" value="Genomic_DNA"/>
</dbReference>
<dbReference type="PIR" id="C49941">
    <property type="entry name" value="C49941"/>
</dbReference>
<dbReference type="RefSeq" id="WP_011557180.1">
    <property type="nucleotide sequence ID" value="NC_008095.1"/>
</dbReference>
<dbReference type="SMR" id="Q07766"/>
<dbReference type="STRING" id="246197.MXAN_7261"/>
<dbReference type="EnsemblBacteria" id="ABF89647">
    <property type="protein sequence ID" value="ABF89647"/>
    <property type="gene ID" value="MXAN_7261"/>
</dbReference>
<dbReference type="GeneID" id="41364427"/>
<dbReference type="KEGG" id="mxa:MXAN_7261"/>
<dbReference type="eggNOG" id="ENOG502Z8P6">
    <property type="taxonomic scope" value="Bacteria"/>
</dbReference>
<dbReference type="HOGENOM" id="CLU_1325024_0_0_7"/>
<dbReference type="OrthoDB" id="344955at2"/>
<dbReference type="Proteomes" id="UP000002402">
    <property type="component" value="Chromosome"/>
</dbReference>
<dbReference type="GO" id="GO:0051607">
    <property type="term" value="P:defense response to virus"/>
    <property type="evidence" value="ECO:0007669"/>
    <property type="project" value="UniProtKB-KW"/>
</dbReference>
<dbReference type="GO" id="GO:0030435">
    <property type="term" value="P:sporulation resulting in formation of a cellular spore"/>
    <property type="evidence" value="ECO:0007669"/>
    <property type="project" value="UniProtKB-KW"/>
</dbReference>
<dbReference type="CDD" id="cd09688">
    <property type="entry name" value="Cas5_I-C"/>
    <property type="match status" value="1"/>
</dbReference>
<dbReference type="InterPro" id="IPR013415">
    <property type="entry name" value="Cas5_Cmx5_DevS"/>
</dbReference>
<dbReference type="InterPro" id="IPR013422">
    <property type="entry name" value="CRISPR-assoc_prot_Cas5_N"/>
</dbReference>
<dbReference type="NCBIfam" id="TIGR02586">
    <property type="entry name" value="cas5_cmx5_devS"/>
    <property type="match status" value="1"/>
</dbReference>
<dbReference type="NCBIfam" id="TIGR02593">
    <property type="entry name" value="CRISPR_cas5"/>
    <property type="match status" value="1"/>
</dbReference>
<name>DEVS_MYXXD</name>
<reference key="1">
    <citation type="journal article" date="1993" name="J. Bacteriol.">
        <title>devRS, an autoregulated and essential genetic locus for fruiting body development in Myxococcus xanthus.</title>
        <authorList>
            <person name="Thoeny-Meyer L."/>
            <person name="Kaiser D."/>
        </authorList>
    </citation>
    <scope>NUCLEOTIDE SEQUENCE [GENOMIC DNA]</scope>
    <scope>INDUCTION</scope>
    <source>
        <strain>DK1622</strain>
    </source>
</reference>
<reference key="2">
    <citation type="journal article" date="2006" name="Proc. Natl. Acad. Sci. U.S.A.">
        <title>Evolution of sensory complexity recorded in a myxobacterial genome.</title>
        <authorList>
            <person name="Goldman B.S."/>
            <person name="Nierman W.C."/>
            <person name="Kaiser D."/>
            <person name="Slater S.C."/>
            <person name="Durkin A.S."/>
            <person name="Eisen J.A."/>
            <person name="Ronning C.M."/>
            <person name="Barbazuk W.B."/>
            <person name="Blanchard M."/>
            <person name="Field C."/>
            <person name="Halling C."/>
            <person name="Hinkle G."/>
            <person name="Iartchuk O."/>
            <person name="Kim H.S."/>
            <person name="Mackenzie C."/>
            <person name="Madupu R."/>
            <person name="Miller N."/>
            <person name="Shvartsbeyn A."/>
            <person name="Sullivan S.A."/>
            <person name="Vaudin M."/>
            <person name="Wiegand R."/>
            <person name="Kaplan H.B."/>
        </authorList>
    </citation>
    <scope>NUCLEOTIDE SEQUENCE [LARGE SCALE GENOMIC DNA]</scope>
    <source>
        <strain>DK1622</strain>
    </source>
</reference>
<reference key="3">
    <citation type="journal article" date="2007" name="J. Bacteriol.">
        <title>Regulation of dev, an operon that includes genes essential for Myxococcus xanthus development and CRISPR-associated genes and repeats.</title>
        <authorList>
            <person name="Viswanathan P."/>
            <person name="Murphy K."/>
            <person name="Julien B."/>
            <person name="Garza A.G."/>
            <person name="Kroos L."/>
        </authorList>
    </citation>
    <scope>FUNCTION IN NEGATIVE AUTOREGULATION</scope>
    <scope>INDUCTION</scope>
    <scope>OPERON STRUCTURE</scope>
    <scope>DISRUPTION PHENOTYPE</scope>
    <source>
        <strain>DK1622</strain>
    </source>
</reference>
<organism>
    <name type="scientific">Myxococcus xanthus (strain DK1622)</name>
    <dbReference type="NCBI Taxonomy" id="246197"/>
    <lineage>
        <taxon>Bacteria</taxon>
        <taxon>Pseudomonadati</taxon>
        <taxon>Myxococcota</taxon>
        <taxon>Myxococcia</taxon>
        <taxon>Myxococcales</taxon>
        <taxon>Cystobacterineae</taxon>
        <taxon>Myxococcaceae</taxon>
        <taxon>Myxococcus</taxon>
    </lineage>
</organism>
<keyword id="KW-0051">Antiviral defense</keyword>
<keyword id="KW-0293">Fruiting body</keyword>
<keyword id="KW-1185">Reference proteome</keyword>
<keyword id="KW-0749">Sporulation</keyword>
<gene>
    <name type="primary">devS</name>
    <name type="synonym">cas5</name>
    <name type="ordered locus">MXAN_7261</name>
</gene>
<protein>
    <recommendedName>
        <fullName>CRISPR-associated protein Cas5</fullName>
    </recommendedName>
    <alternativeName>
        <fullName>Fruiting body developmental protein S</fullName>
    </alternativeName>
</protein>
<feature type="chain" id="PRO_0000079872" description="CRISPR-associated protein Cas5">
    <location>
        <begin position="1"/>
        <end position="214"/>
    </location>
</feature>
<accession>Q07766</accession>
<accession>Q1CW49</accession>
<comment type="function">
    <text evidence="1">CRISPR (clustered regularly interspaced short palindromic repeat) is an adaptive immune system that provides protection against mobile genetic elements (viruses, transposable elements and conjugative plasmids). CRISPR clusters contain spacers, sequences complementary to antecedent mobile elements, and target invading nucleic acids. CRISPR clusters are transcribed and processed into CRISPR RNA (crRNA) (By similarity).</text>
</comment>
<comment type="function">
    <text evidence="2">Has a role in fruiting body development, sporulation and aggregation.</text>
</comment>
<comment type="developmental stage">
    <text>Operon expression begins by 6 hours after starvation has initiated development and is under strong negative autoregulation.</text>
</comment>
<comment type="induction">
    <text evidence="2 3">Part of an operon going from at least MXAN_7266 to MXAN_7259 that includes a CRISPR operon with transcription continuing into the pre-crRNA locus.</text>
</comment>
<comment type="disruption phenotype">
    <text evidence="2">Essential for sporulation, decreases sporulation 100 to 1000-fold. Negative autoregulation by this gene product relies on DNA both upstream and downstream of the operon's promoter.</text>
</comment>
<comment type="similarity">
    <text evidence="4">Belongs to the CRISPR-associated protein Cas5 family.</text>
</comment>
<sequence>MIALELSVPVACWRKGRARELVETEVLPPPATCYGALLSLVGEQDRERHRGCRVTAGVLNAPVISTVLRTFWRSKNLKVAKGNDENAAPDQQQLVIDARLVVWCDSREEPDSGESLEDRVVRAMREPGSVTRAGGWSLGESTHLINDARLLPEGRPPAGCRAFLTASTGALTLPVWVDHVGTRGTRYEVGRLEEVLAAPEVQRLPRIPLAEGAG</sequence>
<proteinExistence type="evidence at protein level"/>
<evidence type="ECO:0000250" key="1"/>
<evidence type="ECO:0000269" key="2">
    <source>
    </source>
</evidence>
<evidence type="ECO:0000269" key="3">
    <source>
    </source>
</evidence>
<evidence type="ECO:0000305" key="4"/>